<feature type="chain" id="PRO_0000073126" description="Ovomucoid">
    <location>
        <begin position="1" status="less than"/>
        <end position="56" status="greater than"/>
    </location>
</feature>
<feature type="domain" description="Kazal-like" evidence="1">
    <location>
        <begin position="6"/>
        <end position="56"/>
    </location>
</feature>
<feature type="site" description="Reactive bond 3">
    <location>
        <begin position="18"/>
        <end position="19"/>
    </location>
</feature>
<feature type="glycosylation site" description="N-linked (GlcNAc...) asparagine">
    <location>
        <position position="45"/>
    </location>
</feature>
<feature type="disulfide bond">
    <location>
        <begin position="8"/>
        <end position="38"/>
    </location>
</feature>
<feature type="disulfide bond">
    <location>
        <begin position="16"/>
        <end position="35"/>
    </location>
</feature>
<feature type="disulfide bond">
    <location>
        <begin position="24"/>
        <end position="56"/>
    </location>
</feature>
<feature type="non-terminal residue">
    <location>
        <position position="1"/>
    </location>
</feature>
<feature type="non-terminal residue">
    <location>
        <position position="56"/>
    </location>
</feature>
<protein>
    <recommendedName>
        <fullName>Ovomucoid</fullName>
    </recommendedName>
</protein>
<organism>
    <name type="scientific">Lagopus leucura</name>
    <name type="common">White-tailed ptarmigan</name>
    <dbReference type="NCBI Taxonomy" id="30410"/>
    <lineage>
        <taxon>Eukaryota</taxon>
        <taxon>Metazoa</taxon>
        <taxon>Chordata</taxon>
        <taxon>Craniata</taxon>
        <taxon>Vertebrata</taxon>
        <taxon>Euteleostomi</taxon>
        <taxon>Archelosauria</taxon>
        <taxon>Archosauria</taxon>
        <taxon>Dinosauria</taxon>
        <taxon>Saurischia</taxon>
        <taxon>Theropoda</taxon>
        <taxon>Coelurosauria</taxon>
        <taxon>Aves</taxon>
        <taxon>Neognathae</taxon>
        <taxon>Galloanserae</taxon>
        <taxon>Galliformes</taxon>
        <taxon>Phasianidae</taxon>
        <taxon>Tetraoninae</taxon>
        <taxon>Lagopus</taxon>
    </lineage>
</organism>
<evidence type="ECO:0000255" key="1">
    <source>
        <dbReference type="PROSITE-ProRule" id="PRU00798"/>
    </source>
</evidence>
<keyword id="KW-0903">Direct protein sequencing</keyword>
<keyword id="KW-1015">Disulfide bond</keyword>
<keyword id="KW-0325">Glycoprotein</keyword>
<keyword id="KW-0646">Protease inhibitor</keyword>
<keyword id="KW-0677">Repeat</keyword>
<keyword id="KW-0964">Secreted</keyword>
<keyword id="KW-0722">Serine protease inhibitor</keyword>
<comment type="subcellular location">
    <subcellularLocation>
        <location>Secreted</location>
    </subcellularLocation>
</comment>
<comment type="domain">
    <text>Avian ovomucoid consists of three homologous, tandem Kazal family inhibitory domains.</text>
</comment>
<sequence length="56" mass="6039">LAAVSVDCSEYPKPACTMEYRPLCGSDNKTYGNKCNFCNAVVESNGTLTLSHFGKC</sequence>
<name>IOVO_LAGLU</name>
<dbReference type="SMR" id="P67961"/>
<dbReference type="GO" id="GO:0005576">
    <property type="term" value="C:extracellular region"/>
    <property type="evidence" value="ECO:0007669"/>
    <property type="project" value="UniProtKB-SubCell"/>
</dbReference>
<dbReference type="GO" id="GO:0004867">
    <property type="term" value="F:serine-type endopeptidase inhibitor activity"/>
    <property type="evidence" value="ECO:0007669"/>
    <property type="project" value="UniProtKB-KW"/>
</dbReference>
<dbReference type="CDD" id="cd00104">
    <property type="entry name" value="KAZAL_FS"/>
    <property type="match status" value="1"/>
</dbReference>
<dbReference type="FunFam" id="3.30.60.30:FF:000037">
    <property type="entry name" value="Ovomucoid"/>
    <property type="match status" value="1"/>
</dbReference>
<dbReference type="Gene3D" id="3.30.60.30">
    <property type="match status" value="1"/>
</dbReference>
<dbReference type="InterPro" id="IPR051597">
    <property type="entry name" value="Bifunctional_prot_inhibitor"/>
</dbReference>
<dbReference type="InterPro" id="IPR002350">
    <property type="entry name" value="Kazal_dom"/>
</dbReference>
<dbReference type="InterPro" id="IPR036058">
    <property type="entry name" value="Kazal_dom_sf"/>
</dbReference>
<dbReference type="InterPro" id="IPR001239">
    <property type="entry name" value="Prot_inh_Kazal-m"/>
</dbReference>
<dbReference type="PANTHER" id="PTHR47729:SF1">
    <property type="entry name" value="OVOMUCOID-LIKE-RELATED"/>
    <property type="match status" value="1"/>
</dbReference>
<dbReference type="PANTHER" id="PTHR47729">
    <property type="entry name" value="SERINE PEPTIDASE INHIBITOR, KAZAL TYPE 2, TANDEM DUPLICATE 1-RELATED"/>
    <property type="match status" value="1"/>
</dbReference>
<dbReference type="Pfam" id="PF00050">
    <property type="entry name" value="Kazal_1"/>
    <property type="match status" value="1"/>
</dbReference>
<dbReference type="PRINTS" id="PR00290">
    <property type="entry name" value="KAZALINHBTR"/>
</dbReference>
<dbReference type="SMART" id="SM00280">
    <property type="entry name" value="KAZAL"/>
    <property type="match status" value="1"/>
</dbReference>
<dbReference type="SUPFAM" id="SSF100895">
    <property type="entry name" value="Kazal-type serine protease inhibitors"/>
    <property type="match status" value="1"/>
</dbReference>
<dbReference type="PROSITE" id="PS00282">
    <property type="entry name" value="KAZAL_1"/>
    <property type="match status" value="1"/>
</dbReference>
<dbReference type="PROSITE" id="PS51465">
    <property type="entry name" value="KAZAL_2"/>
    <property type="match status" value="1"/>
</dbReference>
<proteinExistence type="evidence at protein level"/>
<accession>P67961</accession>
<accession>P05586</accession>
<reference key="1">
    <citation type="journal article" date="1987" name="Biochemistry">
        <title>Ovomucoid third domains from 100 avian species: isolation, sequences, and hypervariability of enzyme-inhibitor contact residues.</title>
        <authorList>
            <person name="Laskowski M. Jr."/>
            <person name="Kato I."/>
            <person name="Ardelt W."/>
            <person name="Cook J."/>
            <person name="Denton A."/>
            <person name="Empie M.W."/>
            <person name="Kohr W.J."/>
            <person name="Park S.J."/>
            <person name="Parks K."/>
            <person name="Schatzley B.L."/>
            <person name="Schoenberger O.L."/>
            <person name="Tashiro M."/>
            <person name="Vichot G."/>
            <person name="Whatley H.E."/>
            <person name="Wieczorek A."/>
            <person name="Wieczorek M."/>
        </authorList>
    </citation>
    <scope>PROTEIN SEQUENCE</scope>
</reference>
<reference key="2">
    <citation type="journal article" date="1993" name="J. Protein Chem.">
        <title>Amino acid sequences of ovomucoid third domains from 27 additional species of birds.</title>
        <authorList>
            <person name="Apostol I."/>
            <person name="Giletto A."/>
            <person name="Komiyama T."/>
            <person name="Zhang W."/>
            <person name="Laskowski M. Jr."/>
        </authorList>
    </citation>
    <scope>PROTEIN SEQUENCE</scope>
</reference>